<proteinExistence type="evidence at protein level"/>
<organism>
    <name type="scientific">Lactococcus lactis subsp. cremoris (strain MG1363)</name>
    <dbReference type="NCBI Taxonomy" id="416870"/>
    <lineage>
        <taxon>Bacteria</taxon>
        <taxon>Bacillati</taxon>
        <taxon>Bacillota</taxon>
        <taxon>Bacilli</taxon>
        <taxon>Lactobacillales</taxon>
        <taxon>Streptococcaceae</taxon>
        <taxon>Lactococcus</taxon>
        <taxon>Lactococcus cremoris subsp. cremoris</taxon>
    </lineage>
</organism>
<name>RL4_LACLM</name>
<feature type="chain" id="PRO_1000052425" description="Large ribosomal subunit protein uL4">
    <location>
        <begin position="1"/>
        <end position="208"/>
    </location>
</feature>
<feature type="region of interest" description="Disordered" evidence="2">
    <location>
        <begin position="45"/>
        <end position="89"/>
    </location>
</feature>
<accession>A2RNQ4</accession>
<comment type="function">
    <text evidence="1">One of the primary rRNA binding proteins, this protein initially binds near the 5'-end of the 23S rRNA. It is important during the early stages of 50S assembly. It makes multiple contacts with different domains of the 23S rRNA in the assembled 50S subunit and ribosome.</text>
</comment>
<comment type="function">
    <text evidence="1">Forms part of the polypeptide exit tunnel.</text>
</comment>
<comment type="subunit">
    <text evidence="1">Part of the 50S ribosomal subunit.</text>
</comment>
<comment type="similarity">
    <text evidence="1">Belongs to the universal ribosomal protein uL4 family.</text>
</comment>
<gene>
    <name evidence="1" type="primary">rplD</name>
    <name type="ordered locus">llmg_2382</name>
</gene>
<evidence type="ECO:0000255" key="1">
    <source>
        <dbReference type="HAMAP-Rule" id="MF_01328"/>
    </source>
</evidence>
<evidence type="ECO:0000256" key="2">
    <source>
        <dbReference type="SAM" id="MobiDB-lite"/>
    </source>
</evidence>
<evidence type="ECO:0000305" key="3"/>
<sequence>MAKVSLFKQDGSQAGEVTLNDSVFGIEPNESVVFDVVISQRASLRQGTHAHKNRSAVSGGGKKPWRQKGTGRARQGSTRSPQWRGGGTVFGPNPRSYAYKLPQKVRQLALKSVYSTKVTDGKLIAVDTLDFAAPKTAEFAKVISALSIERKVLVVLPNEGNEFAELSARNLENVKVTTANSASVLDIVSADKLLVVQSALTQIEEVLA</sequence>
<reference key="1">
    <citation type="journal article" date="2007" name="J. Bacteriol.">
        <title>The complete genome sequence of the lactic acid bacterial paradigm Lactococcus lactis subsp. cremoris MG1363.</title>
        <authorList>
            <person name="Wegmann U."/>
            <person name="O'Connell-Motherway M."/>
            <person name="Zomer A."/>
            <person name="Buist G."/>
            <person name="Shearman C."/>
            <person name="Canchaya C."/>
            <person name="Ventura M."/>
            <person name="Goesmann A."/>
            <person name="Gasson M.J."/>
            <person name="Kuipers O.P."/>
            <person name="van Sinderen D."/>
            <person name="Kok J."/>
        </authorList>
    </citation>
    <scope>NUCLEOTIDE SEQUENCE [LARGE SCALE GENOMIC DNA]</scope>
    <source>
        <strain>MG1363</strain>
    </source>
</reference>
<dbReference type="EMBL" id="AM406671">
    <property type="protein sequence ID" value="CAL98945.1"/>
    <property type="molecule type" value="Genomic_DNA"/>
</dbReference>
<dbReference type="RefSeq" id="WP_011836027.1">
    <property type="nucleotide sequence ID" value="NC_009004.1"/>
</dbReference>
<dbReference type="PDB" id="5MYJ">
    <property type="method" value="EM"/>
    <property type="resolution" value="5.60 A"/>
    <property type="chains" value="BF=1-208"/>
</dbReference>
<dbReference type="PDBsum" id="5MYJ"/>
<dbReference type="EMDB" id="EMD-3581"/>
<dbReference type="SMR" id="A2RNQ4"/>
<dbReference type="STRING" id="416870.llmg_2382"/>
<dbReference type="KEGG" id="llm:llmg_2382"/>
<dbReference type="eggNOG" id="COG0088">
    <property type="taxonomic scope" value="Bacteria"/>
</dbReference>
<dbReference type="HOGENOM" id="CLU_041575_5_2_9"/>
<dbReference type="OrthoDB" id="9803201at2"/>
<dbReference type="PhylomeDB" id="A2RNQ4"/>
<dbReference type="Proteomes" id="UP000000364">
    <property type="component" value="Chromosome"/>
</dbReference>
<dbReference type="GO" id="GO:1990904">
    <property type="term" value="C:ribonucleoprotein complex"/>
    <property type="evidence" value="ECO:0007669"/>
    <property type="project" value="UniProtKB-KW"/>
</dbReference>
<dbReference type="GO" id="GO:0005840">
    <property type="term" value="C:ribosome"/>
    <property type="evidence" value="ECO:0007669"/>
    <property type="project" value="UniProtKB-KW"/>
</dbReference>
<dbReference type="GO" id="GO:0019843">
    <property type="term" value="F:rRNA binding"/>
    <property type="evidence" value="ECO:0007669"/>
    <property type="project" value="UniProtKB-UniRule"/>
</dbReference>
<dbReference type="GO" id="GO:0003735">
    <property type="term" value="F:structural constituent of ribosome"/>
    <property type="evidence" value="ECO:0007669"/>
    <property type="project" value="InterPro"/>
</dbReference>
<dbReference type="GO" id="GO:0006412">
    <property type="term" value="P:translation"/>
    <property type="evidence" value="ECO:0007669"/>
    <property type="project" value="UniProtKB-UniRule"/>
</dbReference>
<dbReference type="FunFam" id="3.40.1370.10:FF:000003">
    <property type="entry name" value="50S ribosomal protein L4"/>
    <property type="match status" value="1"/>
</dbReference>
<dbReference type="Gene3D" id="3.40.1370.10">
    <property type="match status" value="1"/>
</dbReference>
<dbReference type="HAMAP" id="MF_01328_B">
    <property type="entry name" value="Ribosomal_uL4_B"/>
    <property type="match status" value="1"/>
</dbReference>
<dbReference type="InterPro" id="IPR002136">
    <property type="entry name" value="Ribosomal_uL4"/>
</dbReference>
<dbReference type="InterPro" id="IPR013005">
    <property type="entry name" value="Ribosomal_uL4-like"/>
</dbReference>
<dbReference type="InterPro" id="IPR023574">
    <property type="entry name" value="Ribosomal_uL4_dom_sf"/>
</dbReference>
<dbReference type="NCBIfam" id="TIGR03953">
    <property type="entry name" value="rplD_bact"/>
    <property type="match status" value="1"/>
</dbReference>
<dbReference type="PANTHER" id="PTHR10746">
    <property type="entry name" value="50S RIBOSOMAL PROTEIN L4"/>
    <property type="match status" value="1"/>
</dbReference>
<dbReference type="PANTHER" id="PTHR10746:SF6">
    <property type="entry name" value="LARGE RIBOSOMAL SUBUNIT PROTEIN UL4M"/>
    <property type="match status" value="1"/>
</dbReference>
<dbReference type="Pfam" id="PF00573">
    <property type="entry name" value="Ribosomal_L4"/>
    <property type="match status" value="1"/>
</dbReference>
<dbReference type="SUPFAM" id="SSF52166">
    <property type="entry name" value="Ribosomal protein L4"/>
    <property type="match status" value="1"/>
</dbReference>
<protein>
    <recommendedName>
        <fullName evidence="1">Large ribosomal subunit protein uL4</fullName>
    </recommendedName>
    <alternativeName>
        <fullName evidence="3">50S ribosomal protein L4</fullName>
    </alternativeName>
</protein>
<keyword id="KW-0002">3D-structure</keyword>
<keyword id="KW-0687">Ribonucleoprotein</keyword>
<keyword id="KW-0689">Ribosomal protein</keyword>
<keyword id="KW-0694">RNA-binding</keyword>
<keyword id="KW-0699">rRNA-binding</keyword>